<gene>
    <name evidence="1" type="primary">fmt</name>
    <name type="ordered locus">COXBURSA331_A0090</name>
</gene>
<feature type="chain" id="PRO_1000077296" description="Methionyl-tRNA formyltransferase">
    <location>
        <begin position="1"/>
        <end position="314"/>
    </location>
</feature>
<feature type="binding site" evidence="1">
    <location>
        <begin position="111"/>
        <end position="114"/>
    </location>
    <ligand>
        <name>(6S)-5,6,7,8-tetrahydrofolate</name>
        <dbReference type="ChEBI" id="CHEBI:57453"/>
    </ligand>
</feature>
<proteinExistence type="inferred from homology"/>
<dbReference type="EC" id="2.1.2.9" evidence="1"/>
<dbReference type="EMBL" id="CP000890">
    <property type="protein sequence ID" value="ABX78879.1"/>
    <property type="molecule type" value="Genomic_DNA"/>
</dbReference>
<dbReference type="RefSeq" id="WP_010958586.1">
    <property type="nucleotide sequence ID" value="NC_010117.1"/>
</dbReference>
<dbReference type="SMR" id="A9N9H5"/>
<dbReference type="KEGG" id="cbs:COXBURSA331_A0090"/>
<dbReference type="HOGENOM" id="CLU_033347_1_2_6"/>
<dbReference type="GO" id="GO:0005829">
    <property type="term" value="C:cytosol"/>
    <property type="evidence" value="ECO:0007669"/>
    <property type="project" value="TreeGrafter"/>
</dbReference>
<dbReference type="GO" id="GO:0004479">
    <property type="term" value="F:methionyl-tRNA formyltransferase activity"/>
    <property type="evidence" value="ECO:0007669"/>
    <property type="project" value="UniProtKB-UniRule"/>
</dbReference>
<dbReference type="CDD" id="cd08646">
    <property type="entry name" value="FMT_core_Met-tRNA-FMT_N"/>
    <property type="match status" value="1"/>
</dbReference>
<dbReference type="CDD" id="cd08704">
    <property type="entry name" value="Met_tRNA_FMT_C"/>
    <property type="match status" value="1"/>
</dbReference>
<dbReference type="FunFam" id="3.40.50.12230:FF:000001">
    <property type="entry name" value="Methionyl-tRNA formyltransferase"/>
    <property type="match status" value="1"/>
</dbReference>
<dbReference type="FunFam" id="3.40.50.170:FF:000003">
    <property type="entry name" value="Methionyl-tRNA formyltransferase"/>
    <property type="match status" value="1"/>
</dbReference>
<dbReference type="Gene3D" id="3.10.25.10">
    <property type="entry name" value="Formyl transferase, C-terminal domain"/>
    <property type="match status" value="1"/>
</dbReference>
<dbReference type="Gene3D" id="3.40.50.170">
    <property type="entry name" value="Formyl transferase, N-terminal domain"/>
    <property type="match status" value="1"/>
</dbReference>
<dbReference type="HAMAP" id="MF_00182">
    <property type="entry name" value="Formyl_trans"/>
    <property type="match status" value="1"/>
</dbReference>
<dbReference type="InterPro" id="IPR005794">
    <property type="entry name" value="Fmt"/>
</dbReference>
<dbReference type="InterPro" id="IPR005793">
    <property type="entry name" value="Formyl_trans_C"/>
</dbReference>
<dbReference type="InterPro" id="IPR037022">
    <property type="entry name" value="Formyl_trans_C_sf"/>
</dbReference>
<dbReference type="InterPro" id="IPR002376">
    <property type="entry name" value="Formyl_transf_N"/>
</dbReference>
<dbReference type="InterPro" id="IPR036477">
    <property type="entry name" value="Formyl_transf_N_sf"/>
</dbReference>
<dbReference type="InterPro" id="IPR011034">
    <property type="entry name" value="Formyl_transferase-like_C_sf"/>
</dbReference>
<dbReference type="InterPro" id="IPR001555">
    <property type="entry name" value="GART_AS"/>
</dbReference>
<dbReference type="InterPro" id="IPR044135">
    <property type="entry name" value="Met-tRNA-FMT_C"/>
</dbReference>
<dbReference type="InterPro" id="IPR041711">
    <property type="entry name" value="Met-tRNA-FMT_N"/>
</dbReference>
<dbReference type="NCBIfam" id="TIGR00460">
    <property type="entry name" value="fmt"/>
    <property type="match status" value="1"/>
</dbReference>
<dbReference type="PANTHER" id="PTHR11138">
    <property type="entry name" value="METHIONYL-TRNA FORMYLTRANSFERASE"/>
    <property type="match status" value="1"/>
</dbReference>
<dbReference type="PANTHER" id="PTHR11138:SF5">
    <property type="entry name" value="METHIONYL-TRNA FORMYLTRANSFERASE, MITOCHONDRIAL"/>
    <property type="match status" value="1"/>
</dbReference>
<dbReference type="Pfam" id="PF02911">
    <property type="entry name" value="Formyl_trans_C"/>
    <property type="match status" value="1"/>
</dbReference>
<dbReference type="Pfam" id="PF00551">
    <property type="entry name" value="Formyl_trans_N"/>
    <property type="match status" value="1"/>
</dbReference>
<dbReference type="SUPFAM" id="SSF50486">
    <property type="entry name" value="FMT C-terminal domain-like"/>
    <property type="match status" value="1"/>
</dbReference>
<dbReference type="SUPFAM" id="SSF53328">
    <property type="entry name" value="Formyltransferase"/>
    <property type="match status" value="1"/>
</dbReference>
<dbReference type="PROSITE" id="PS00373">
    <property type="entry name" value="GART"/>
    <property type="match status" value="1"/>
</dbReference>
<organism>
    <name type="scientific">Coxiella burnetii (strain RSA 331 / Henzerling II)</name>
    <dbReference type="NCBI Taxonomy" id="360115"/>
    <lineage>
        <taxon>Bacteria</taxon>
        <taxon>Pseudomonadati</taxon>
        <taxon>Pseudomonadota</taxon>
        <taxon>Gammaproteobacteria</taxon>
        <taxon>Legionellales</taxon>
        <taxon>Coxiellaceae</taxon>
        <taxon>Coxiella</taxon>
    </lineage>
</organism>
<accession>A9N9H5</accession>
<evidence type="ECO:0000255" key="1">
    <source>
        <dbReference type="HAMAP-Rule" id="MF_00182"/>
    </source>
</evidence>
<protein>
    <recommendedName>
        <fullName evidence="1">Methionyl-tRNA formyltransferase</fullName>
        <ecNumber evidence="1">2.1.2.9</ecNumber>
    </recommendedName>
</protein>
<comment type="function">
    <text evidence="1">Attaches a formyl group to the free amino group of methionyl-tRNA(fMet). The formyl group appears to play a dual role in the initiator identity of N-formylmethionyl-tRNA by promoting its recognition by IF2 and preventing the misappropriation of this tRNA by the elongation apparatus.</text>
</comment>
<comment type="catalytic activity">
    <reaction evidence="1">
        <text>L-methionyl-tRNA(fMet) + (6R)-10-formyltetrahydrofolate = N-formyl-L-methionyl-tRNA(fMet) + (6S)-5,6,7,8-tetrahydrofolate + H(+)</text>
        <dbReference type="Rhea" id="RHEA:24380"/>
        <dbReference type="Rhea" id="RHEA-COMP:9952"/>
        <dbReference type="Rhea" id="RHEA-COMP:9953"/>
        <dbReference type="ChEBI" id="CHEBI:15378"/>
        <dbReference type="ChEBI" id="CHEBI:57453"/>
        <dbReference type="ChEBI" id="CHEBI:78530"/>
        <dbReference type="ChEBI" id="CHEBI:78844"/>
        <dbReference type="ChEBI" id="CHEBI:195366"/>
        <dbReference type="EC" id="2.1.2.9"/>
    </reaction>
</comment>
<comment type="similarity">
    <text evidence="1">Belongs to the Fmt family.</text>
</comment>
<name>FMT_COXBR</name>
<keyword id="KW-0648">Protein biosynthesis</keyword>
<keyword id="KW-0808">Transferase</keyword>
<reference key="1">
    <citation type="submission" date="2007-11" db="EMBL/GenBank/DDBJ databases">
        <title>Genome sequencing of phylogenetically and phenotypically diverse Coxiella burnetii isolates.</title>
        <authorList>
            <person name="Seshadri R."/>
            <person name="Samuel J.E."/>
        </authorList>
    </citation>
    <scope>NUCLEOTIDE SEQUENCE [LARGE SCALE GENOMIC DNA]</scope>
    <source>
        <strain>RSA 331 / Henzerling II</strain>
    </source>
</reference>
<sequence length="314" mass="34288">MSLKIVFAGTPQFAVPTLRALIDSSHRVLAVYTQPDRPSGRGQKIMESPVKEIARQNEIPIIQPFSLRDEVEQEKLIAMNADVMVVVAYGLILPKKALNAFRLGCVNVHASLLPRWRGAAPIQRAILAGDRETGISIMQMNEGLDTGDVLAKSACVISSEDTAADLHDRLSLIGADLLLESLAKLEKGDIKLEKQDEASATYASKIQKQEALIDWRKSAVEIARQVRAFNPTPIAFTYFEGQPMRIWRATVVDEKTDFEPGVLVDADKKGISIAAGSGILRLHQLQLPGKRVCSAGDFINAHGDKLIPGKTVFG</sequence>